<feature type="chain" id="PRO_0000354063" description="Stress-activated protein kinase alpha">
    <location>
        <begin position="1"/>
        <end position="638"/>
    </location>
</feature>
<feature type="repeat" description="ANK 1">
    <location>
        <begin position="43"/>
        <end position="72"/>
    </location>
</feature>
<feature type="repeat" description="ANK 2">
    <location>
        <begin position="80"/>
        <end position="109"/>
    </location>
</feature>
<feature type="repeat" description="ANK 3">
    <location>
        <begin position="113"/>
        <end position="146"/>
    </location>
</feature>
<feature type="repeat" description="ANK 4">
    <location>
        <begin position="150"/>
        <end position="181"/>
    </location>
</feature>
<feature type="repeat" description="ANK 5">
    <location>
        <begin position="185"/>
        <end position="214"/>
    </location>
</feature>
<feature type="repeat" description="ANK 6">
    <location>
        <begin position="219"/>
        <end position="248"/>
    </location>
</feature>
<feature type="domain" description="SAM" evidence="2">
    <location>
        <begin position="240"/>
        <end position="303"/>
    </location>
</feature>
<feature type="domain" description="Protein kinase" evidence="1">
    <location>
        <begin position="351"/>
        <end position="620"/>
    </location>
</feature>
<feature type="active site" description="Proton acceptor" evidence="1 3">
    <location>
        <position position="472"/>
    </location>
</feature>
<feature type="binding site" evidence="1">
    <location>
        <begin position="357"/>
        <end position="365"/>
    </location>
    <ligand>
        <name>ATP</name>
        <dbReference type="ChEBI" id="CHEBI:30616"/>
    </ligand>
</feature>
<feature type="binding site" evidence="5">
    <location>
        <position position="378"/>
    </location>
    <ligand>
        <name>ATP</name>
        <dbReference type="ChEBI" id="CHEBI:30616"/>
    </ligand>
</feature>
<feature type="mutagenesis site" description="Loss of kinase activity." evidence="4">
    <original>K</original>
    <variation>A</variation>
    <location>
        <position position="378"/>
    </location>
</feature>
<feature type="sequence conflict" description="In Ref. 4; AAA80242." evidence="5" ref="4">
    <original>V</original>
    <variation>G</variation>
    <location>
        <position position="99"/>
    </location>
</feature>
<feature type="sequence conflict" description="In Ref. 4; AAA80242." evidence="5" ref="4">
    <original>ND</original>
    <variation>KY</variation>
    <location>
        <begin position="347"/>
        <end position="348"/>
    </location>
</feature>
<feature type="sequence conflict" description="In Ref. 4; AAA80242." evidence="5" ref="4">
    <original>HFY</original>
    <variation>PEF</variation>
    <location>
        <begin position="409"/>
        <end position="411"/>
    </location>
</feature>
<evidence type="ECO:0000255" key="1">
    <source>
        <dbReference type="PROSITE-ProRule" id="PRU00159"/>
    </source>
</evidence>
<evidence type="ECO:0000255" key="2">
    <source>
        <dbReference type="PROSITE-ProRule" id="PRU00184"/>
    </source>
</evidence>
<evidence type="ECO:0000255" key="3">
    <source>
        <dbReference type="PROSITE-ProRule" id="PRU10027"/>
    </source>
</evidence>
<evidence type="ECO:0000269" key="4">
    <source>
    </source>
</evidence>
<evidence type="ECO:0000305" key="5"/>
<sequence length="638" mass="72983">MSSTQQQQHQLFSAVEQNDVTKVKKLSSKKKISKSNLTSFDQYGQSALTIALKNNNEEMVELLLSLCVTLKADINTFDKNGFSALHQAVSSDDRILMRVLQYENINVDVQNDDLNTPIHYFCQKFRSPNCQEPFQLFIQKGVNVNAQNKNGETPLHKAIFNNSVRLMMVGLLLKNGANVNLATQFQESPLHYAVRLGREDLVSVLLKAGADVDCVGTKERKTPYQLAVEEGNKDMTARIKKYKDLFDWLQKHGFEQYKDAFLKEEMFLDELGEMSEDILNKMGITSTGTRLRILKETSNLANEQTKKPKTPELIIEEDPTPPDTPDISGLRHSLHTLRHVGEVNIINDNELEYTEKLGAGSSGKVYKGLYRGKEVAIKVLKSMTESKEIEEFKKEFQIMSAIRSKHVVHFYGAVLEPKLCMVMENCSRGSLYHVMDNNSLDIGWERTFRFAIETVRGIECLHKWDPPIVHRDLKSLNLLVNDKWEIKVCDFGLSRFNTGSNLETLVKMRGTFAYCAPEVYYGEQFSGKSDVYSIAVILWELVTRCINGRYERPFSEYKNLQHDFQIIIQTAKKNLRPTIPNACPESLVSLIQDCWDPNLENRPTCTDILSRLVTIENEYRSNIQTWNNLIVPLPKNQE</sequence>
<gene>
    <name type="primary">spkA-1</name>
    <name type="ORF">DDB_G0273445</name>
</gene>
<gene>
    <name type="primary">spkA-2</name>
    <name type="ORF">DDB_G0273531</name>
</gene>
<reference key="1">
    <citation type="journal article" date="2003" name="Mol. Biol. Cell">
        <title>Dictyostelium stress-activated protein kinase alpha, a novel stress-activated mitogen-activated protein kinase kinase kinase-like kinase, is important for the proper regulation of the cytoskeleton.</title>
        <authorList>
            <person name="Sun B."/>
            <person name="Ma H."/>
            <person name="Firtel R.A."/>
        </authorList>
    </citation>
    <scope>NUCLEOTIDE SEQUENCE [MRNA]</scope>
    <scope>DEVELOPMENTAL STAGE</scope>
    <scope>MUTAGENESIS OF LYS-378</scope>
    <scope>AUTOPHOSPHORYLATION</scope>
    <scope>FUNCTION</scope>
    <scope>SUBCELLULAR LOCATION</scope>
    <scope>INTERACTION WITH F-ACTIN</scope>
</reference>
<reference key="2">
    <citation type="journal article" date="2002" name="Nature">
        <title>Sequence and analysis of chromosome 2 of Dictyostelium discoideum.</title>
        <authorList>
            <person name="Gloeckner G."/>
            <person name="Eichinger L."/>
            <person name="Szafranski K."/>
            <person name="Pachebat J.A."/>
            <person name="Bankier A.T."/>
            <person name="Dear P.H."/>
            <person name="Lehmann R."/>
            <person name="Baumgart C."/>
            <person name="Parra G."/>
            <person name="Abril J.F."/>
            <person name="Guigo R."/>
            <person name="Kumpf K."/>
            <person name="Tunggal B."/>
            <person name="Cox E.C."/>
            <person name="Quail M.A."/>
            <person name="Platzer M."/>
            <person name="Rosenthal A."/>
            <person name="Noegel A.A."/>
        </authorList>
    </citation>
    <scope>NUCLEOTIDE SEQUENCE [LARGE SCALE GENOMIC DNA]</scope>
    <source>
        <strain>AX4</strain>
    </source>
</reference>
<reference key="3">
    <citation type="journal article" date="2005" name="Nature">
        <title>The genome of the social amoeba Dictyostelium discoideum.</title>
        <authorList>
            <person name="Eichinger L."/>
            <person name="Pachebat J.A."/>
            <person name="Gloeckner G."/>
            <person name="Rajandream M.A."/>
            <person name="Sucgang R."/>
            <person name="Berriman M."/>
            <person name="Song J."/>
            <person name="Olsen R."/>
            <person name="Szafranski K."/>
            <person name="Xu Q."/>
            <person name="Tunggal B."/>
            <person name="Kummerfeld S."/>
            <person name="Madera M."/>
            <person name="Konfortov B.A."/>
            <person name="Rivero F."/>
            <person name="Bankier A.T."/>
            <person name="Lehmann R."/>
            <person name="Hamlin N."/>
            <person name="Davies R."/>
            <person name="Gaudet P."/>
            <person name="Fey P."/>
            <person name="Pilcher K."/>
            <person name="Chen G."/>
            <person name="Saunders D."/>
            <person name="Sodergren E.J."/>
            <person name="Davis P."/>
            <person name="Kerhornou A."/>
            <person name="Nie X."/>
            <person name="Hall N."/>
            <person name="Anjard C."/>
            <person name="Hemphill L."/>
            <person name="Bason N."/>
            <person name="Farbrother P."/>
            <person name="Desany B."/>
            <person name="Just E."/>
            <person name="Morio T."/>
            <person name="Rost R."/>
            <person name="Churcher C.M."/>
            <person name="Cooper J."/>
            <person name="Haydock S."/>
            <person name="van Driessche N."/>
            <person name="Cronin A."/>
            <person name="Goodhead I."/>
            <person name="Muzny D.M."/>
            <person name="Mourier T."/>
            <person name="Pain A."/>
            <person name="Lu M."/>
            <person name="Harper D."/>
            <person name="Lindsay R."/>
            <person name="Hauser H."/>
            <person name="James K.D."/>
            <person name="Quiles M."/>
            <person name="Madan Babu M."/>
            <person name="Saito T."/>
            <person name="Buchrieser C."/>
            <person name="Wardroper A."/>
            <person name="Felder M."/>
            <person name="Thangavelu M."/>
            <person name="Johnson D."/>
            <person name="Knights A."/>
            <person name="Loulseged H."/>
            <person name="Mungall K.L."/>
            <person name="Oliver K."/>
            <person name="Price C."/>
            <person name="Quail M.A."/>
            <person name="Urushihara H."/>
            <person name="Hernandez J."/>
            <person name="Rabbinowitsch E."/>
            <person name="Steffen D."/>
            <person name="Sanders M."/>
            <person name="Ma J."/>
            <person name="Kohara Y."/>
            <person name="Sharp S."/>
            <person name="Simmonds M.N."/>
            <person name="Spiegler S."/>
            <person name="Tivey A."/>
            <person name="Sugano S."/>
            <person name="White B."/>
            <person name="Walker D."/>
            <person name="Woodward J.R."/>
            <person name="Winckler T."/>
            <person name="Tanaka Y."/>
            <person name="Shaulsky G."/>
            <person name="Schleicher M."/>
            <person name="Weinstock G.M."/>
            <person name="Rosenthal A."/>
            <person name="Cox E.C."/>
            <person name="Chisholm R.L."/>
            <person name="Gibbs R.A."/>
            <person name="Loomis W.F."/>
            <person name="Platzer M."/>
            <person name="Kay R.R."/>
            <person name="Williams J.G."/>
            <person name="Dear P.H."/>
            <person name="Noegel A.A."/>
            <person name="Barrell B.G."/>
            <person name="Kuspa A."/>
        </authorList>
    </citation>
    <scope>NUCLEOTIDE SEQUENCE [LARGE SCALE GENOMIC DNA]</scope>
    <source>
        <strain>AX4</strain>
    </source>
</reference>
<reference key="4">
    <citation type="submission" date="1995-09" db="EMBL/GenBank/DDBJ databases">
        <authorList>
            <person name="Mueller-Taubenberger A."/>
            <person name="Gerisch G."/>
        </authorList>
    </citation>
    <scope>NUCLEOTIDE SEQUENCE [MRNA] OF 1-411</scope>
    <source>
        <strain>AX3</strain>
    </source>
</reference>
<reference key="5">
    <citation type="journal article" date="2007" name="Proc. Natl. Acad. Sci. U.S.A.">
        <title>Global transcriptional responses to cisplatin in Dictyostelium discoideum identify potential drug targets.</title>
        <authorList>
            <person name="Van Driessche N."/>
            <person name="Alexander H."/>
            <person name="Min J."/>
            <person name="Kuspa A."/>
            <person name="Alexander S."/>
            <person name="Shaulsky G."/>
        </authorList>
    </citation>
    <scope>IDENTIFICATION</scope>
</reference>
<proteinExistence type="evidence at protein level"/>
<name>SPKA_DICDI</name>
<comment type="function">
    <text evidence="4">May be involved in cortical F-actin organization and resistance to osmotic stress. Activated upon cell detachment, in vitro.</text>
</comment>
<comment type="catalytic activity">
    <reaction>
        <text>L-seryl-[protein] + ATP = O-phospho-L-seryl-[protein] + ADP + H(+)</text>
        <dbReference type="Rhea" id="RHEA:17989"/>
        <dbReference type="Rhea" id="RHEA-COMP:9863"/>
        <dbReference type="Rhea" id="RHEA-COMP:11604"/>
        <dbReference type="ChEBI" id="CHEBI:15378"/>
        <dbReference type="ChEBI" id="CHEBI:29999"/>
        <dbReference type="ChEBI" id="CHEBI:30616"/>
        <dbReference type="ChEBI" id="CHEBI:83421"/>
        <dbReference type="ChEBI" id="CHEBI:456216"/>
        <dbReference type="EC" id="2.7.11.1"/>
    </reaction>
</comment>
<comment type="catalytic activity">
    <reaction>
        <text>L-threonyl-[protein] + ATP = O-phospho-L-threonyl-[protein] + ADP + H(+)</text>
        <dbReference type="Rhea" id="RHEA:46608"/>
        <dbReference type="Rhea" id="RHEA-COMP:11060"/>
        <dbReference type="Rhea" id="RHEA-COMP:11605"/>
        <dbReference type="ChEBI" id="CHEBI:15378"/>
        <dbReference type="ChEBI" id="CHEBI:30013"/>
        <dbReference type="ChEBI" id="CHEBI:30616"/>
        <dbReference type="ChEBI" id="CHEBI:61977"/>
        <dbReference type="ChEBI" id="CHEBI:456216"/>
        <dbReference type="EC" id="2.7.11.1"/>
    </reaction>
</comment>
<comment type="subunit">
    <text evidence="4">Interacts with F-actin.</text>
</comment>
<comment type="subcellular location">
    <subcellularLocation>
        <location evidence="4">Cytoplasm</location>
        <location evidence="4">Cytoskeleton</location>
    </subcellularLocation>
    <text>Associated with the cytoskeletal cortex in response to chemoattractant stimulation. Colocalizes with F-actin in F-actin-enriched structures, including membrane ruffles and pseudopodia during chemotaxis.</text>
</comment>
<comment type="developmental stage">
    <text evidence="4">There are 2 transcripts. The smaller transcript is high in vegetative cells and during early development and rapidly decreases after 12 hours, the time of tipped aggregate formation. A larger transcript occurs at 8 hours of development, remains high through the 12 hours time point, and then decreases, like the smaller transcript.</text>
</comment>
<comment type="PTM">
    <text evidence="5">Autophosphorylated.</text>
</comment>
<comment type="similarity">
    <text evidence="5">Belongs to the protein kinase superfamily. TKL Ser/Thr protein kinase family.</text>
</comment>
<comment type="caution">
    <text evidence="5">The gene for this protein is duplicated in strains AX3 and AX4. These strains contain a duplication of a segment of 750 kb of chromosome 2 compared to the corresponding sequence in strain AX2.</text>
</comment>
<comment type="sequence caution" evidence="5">
    <conflict type="frameshift">
        <sequence resource="EMBL-CDS" id="AAA80242"/>
    </conflict>
</comment>
<dbReference type="EC" id="2.7.11.1"/>
<dbReference type="EMBL" id="AY353245">
    <property type="protein sequence ID" value="AAQ57595.1"/>
    <property type="molecule type" value="mRNA"/>
</dbReference>
<dbReference type="EMBL" id="AAFI02000010">
    <property type="protein sequence ID" value="EAL70677.1"/>
    <property type="molecule type" value="Genomic_DNA"/>
</dbReference>
<dbReference type="EMBL" id="AAFI02000010">
    <property type="protein sequence ID" value="EAL70720.1"/>
    <property type="molecule type" value="Genomic_DNA"/>
</dbReference>
<dbReference type="EMBL" id="U36938">
    <property type="protein sequence ID" value="AAA80242.1"/>
    <property type="status" value="ALT_FRAME"/>
    <property type="molecule type" value="mRNA"/>
</dbReference>
<dbReference type="RefSeq" id="XP_644604.1">
    <property type="nucleotide sequence ID" value="XM_639512.1"/>
</dbReference>
<dbReference type="RefSeq" id="XP_644647.1">
    <property type="nucleotide sequence ID" value="XM_639555.1"/>
</dbReference>
<dbReference type="SMR" id="Q86AT8"/>
<dbReference type="FunCoup" id="Q86AT8">
    <property type="interactions" value="4"/>
</dbReference>
<dbReference type="STRING" id="44689.Q86AT8"/>
<dbReference type="GlyGen" id="Q86AT8">
    <property type="glycosylation" value="1 site"/>
</dbReference>
<dbReference type="PaxDb" id="44689-DDB0185206"/>
<dbReference type="EnsemblProtists" id="EAL70677">
    <property type="protein sequence ID" value="EAL70677"/>
    <property type="gene ID" value="DDB_G0273445"/>
</dbReference>
<dbReference type="EnsemblProtists" id="EAL70720">
    <property type="protein sequence ID" value="EAL70720"/>
    <property type="gene ID" value="DDB_G0273531"/>
</dbReference>
<dbReference type="GeneID" id="8618968"/>
<dbReference type="GeneID" id="8619009"/>
<dbReference type="KEGG" id="ddi:DDB_G0273445"/>
<dbReference type="KEGG" id="ddi:DDB_G0273531"/>
<dbReference type="dictyBase" id="DDB_G0273445">
    <property type="gene designation" value="spkA-1"/>
</dbReference>
<dbReference type="dictyBase" id="DDB_G0273531">
    <property type="gene designation" value="spkA-2"/>
</dbReference>
<dbReference type="VEuPathDB" id="AmoebaDB:DDB_G0273531"/>
<dbReference type="eggNOG" id="KOG0192">
    <property type="taxonomic scope" value="Eukaryota"/>
</dbReference>
<dbReference type="HOGENOM" id="CLU_020450_0_0_1"/>
<dbReference type="InParanoid" id="Q86AT8"/>
<dbReference type="OMA" id="EMINQSF"/>
<dbReference type="PhylomeDB" id="Q86AT8"/>
<dbReference type="Reactome" id="R-DDI-5673000">
    <property type="pathway name" value="RAF activation"/>
</dbReference>
<dbReference type="Reactome" id="R-DDI-5675221">
    <property type="pathway name" value="Negative regulation of MAPK pathway"/>
</dbReference>
<dbReference type="PRO" id="PR:Q86AT8"/>
<dbReference type="Proteomes" id="UP000002195">
    <property type="component" value="Chromosome 2"/>
</dbReference>
<dbReference type="GO" id="GO:0015629">
    <property type="term" value="C:actin cytoskeleton"/>
    <property type="evidence" value="ECO:0000314"/>
    <property type="project" value="dictyBase"/>
</dbReference>
<dbReference type="GO" id="GO:0005737">
    <property type="term" value="C:cytoplasm"/>
    <property type="evidence" value="ECO:0000314"/>
    <property type="project" value="dictyBase"/>
</dbReference>
<dbReference type="GO" id="GO:0003779">
    <property type="term" value="F:actin binding"/>
    <property type="evidence" value="ECO:0007669"/>
    <property type="project" value="UniProtKB-KW"/>
</dbReference>
<dbReference type="GO" id="GO:0005524">
    <property type="term" value="F:ATP binding"/>
    <property type="evidence" value="ECO:0007669"/>
    <property type="project" value="UniProtKB-KW"/>
</dbReference>
<dbReference type="GO" id="GO:0004672">
    <property type="term" value="F:protein kinase activity"/>
    <property type="evidence" value="ECO:0000314"/>
    <property type="project" value="dictyBase"/>
</dbReference>
<dbReference type="GO" id="GO:0106310">
    <property type="term" value="F:protein serine kinase activity"/>
    <property type="evidence" value="ECO:0007669"/>
    <property type="project" value="RHEA"/>
</dbReference>
<dbReference type="GO" id="GO:0004674">
    <property type="term" value="F:protein serine/threonine kinase activity"/>
    <property type="evidence" value="ECO:0007669"/>
    <property type="project" value="UniProtKB-KW"/>
</dbReference>
<dbReference type="GO" id="GO:0030036">
    <property type="term" value="P:actin cytoskeleton organization"/>
    <property type="evidence" value="ECO:0000315"/>
    <property type="project" value="dictyBase"/>
</dbReference>
<dbReference type="GO" id="GO:0006935">
    <property type="term" value="P:chemotaxis"/>
    <property type="evidence" value="ECO:0000315"/>
    <property type="project" value="dictyBase"/>
</dbReference>
<dbReference type="GO" id="GO:0000281">
    <property type="term" value="P:mitotic cytokinesis"/>
    <property type="evidence" value="ECO:0000315"/>
    <property type="project" value="dictyBase"/>
</dbReference>
<dbReference type="GO" id="GO:0050793">
    <property type="term" value="P:regulation of developmental process"/>
    <property type="evidence" value="ECO:0000315"/>
    <property type="project" value="dictyBase"/>
</dbReference>
<dbReference type="GO" id="GO:0006970">
    <property type="term" value="P:response to osmotic stress"/>
    <property type="evidence" value="ECO:0000314"/>
    <property type="project" value="dictyBase"/>
</dbReference>
<dbReference type="GO" id="GO:0007165">
    <property type="term" value="P:signal transduction"/>
    <property type="evidence" value="ECO:0000318"/>
    <property type="project" value="GO_Central"/>
</dbReference>
<dbReference type="CDD" id="cd09487">
    <property type="entry name" value="SAM_superfamily"/>
    <property type="match status" value="1"/>
</dbReference>
<dbReference type="CDD" id="cd13999">
    <property type="entry name" value="STKc_MAP3K-like"/>
    <property type="match status" value="1"/>
</dbReference>
<dbReference type="FunFam" id="3.30.200.20:FF:000034">
    <property type="entry name" value="Kinase suppressor of Ras 1"/>
    <property type="match status" value="1"/>
</dbReference>
<dbReference type="FunFam" id="1.10.150.50:FF:000129">
    <property type="entry name" value="Probable serine/threonine-protein kinase DDB_G0278535"/>
    <property type="match status" value="1"/>
</dbReference>
<dbReference type="FunFam" id="1.10.510.10:FF:001060">
    <property type="entry name" value="Probable serine/threonine-protein kinase DDB_G0278535"/>
    <property type="match status" value="1"/>
</dbReference>
<dbReference type="FunFam" id="1.25.40.20:FF:000433">
    <property type="entry name" value="Probable serine/threonine-protein kinase DDB_G0278535"/>
    <property type="match status" value="1"/>
</dbReference>
<dbReference type="Gene3D" id="1.25.40.20">
    <property type="entry name" value="Ankyrin repeat-containing domain"/>
    <property type="match status" value="2"/>
</dbReference>
<dbReference type="Gene3D" id="3.30.200.20">
    <property type="entry name" value="Phosphorylase Kinase, domain 1"/>
    <property type="match status" value="1"/>
</dbReference>
<dbReference type="Gene3D" id="1.10.150.50">
    <property type="entry name" value="Transcription Factor, Ets-1"/>
    <property type="match status" value="1"/>
</dbReference>
<dbReference type="Gene3D" id="1.10.510.10">
    <property type="entry name" value="Transferase(Phosphotransferase) domain 1"/>
    <property type="match status" value="1"/>
</dbReference>
<dbReference type="InterPro" id="IPR002110">
    <property type="entry name" value="Ankyrin_rpt"/>
</dbReference>
<dbReference type="InterPro" id="IPR036770">
    <property type="entry name" value="Ankyrin_rpt-contain_sf"/>
</dbReference>
<dbReference type="InterPro" id="IPR011009">
    <property type="entry name" value="Kinase-like_dom_sf"/>
</dbReference>
<dbReference type="InterPro" id="IPR000719">
    <property type="entry name" value="Prot_kinase_dom"/>
</dbReference>
<dbReference type="InterPro" id="IPR017441">
    <property type="entry name" value="Protein_kinase_ATP_BS"/>
</dbReference>
<dbReference type="InterPro" id="IPR001660">
    <property type="entry name" value="SAM"/>
</dbReference>
<dbReference type="InterPro" id="IPR013761">
    <property type="entry name" value="SAM/pointed_sf"/>
</dbReference>
<dbReference type="InterPro" id="IPR001245">
    <property type="entry name" value="Ser-Thr/Tyr_kinase_cat_dom"/>
</dbReference>
<dbReference type="InterPro" id="IPR008271">
    <property type="entry name" value="Ser/Thr_kinase_AS"/>
</dbReference>
<dbReference type="InterPro" id="IPR051681">
    <property type="entry name" value="Ser/Thr_Kinases-Pseudokinases"/>
</dbReference>
<dbReference type="PANTHER" id="PTHR44329:SF288">
    <property type="entry name" value="MITOGEN-ACTIVATED PROTEIN KINASE KINASE KINASE 20"/>
    <property type="match status" value="1"/>
</dbReference>
<dbReference type="PANTHER" id="PTHR44329">
    <property type="entry name" value="SERINE/THREONINE-PROTEIN KINASE TNNI3K-RELATED"/>
    <property type="match status" value="1"/>
</dbReference>
<dbReference type="Pfam" id="PF12796">
    <property type="entry name" value="Ank_2"/>
    <property type="match status" value="2"/>
</dbReference>
<dbReference type="Pfam" id="PF13637">
    <property type="entry name" value="Ank_4"/>
    <property type="match status" value="1"/>
</dbReference>
<dbReference type="Pfam" id="PF07714">
    <property type="entry name" value="PK_Tyr_Ser-Thr"/>
    <property type="match status" value="1"/>
</dbReference>
<dbReference type="Pfam" id="PF00536">
    <property type="entry name" value="SAM_1"/>
    <property type="match status" value="1"/>
</dbReference>
<dbReference type="PRINTS" id="PR01415">
    <property type="entry name" value="ANKYRIN"/>
</dbReference>
<dbReference type="SMART" id="SM00248">
    <property type="entry name" value="ANK"/>
    <property type="match status" value="6"/>
</dbReference>
<dbReference type="SMART" id="SM00220">
    <property type="entry name" value="S_TKc"/>
    <property type="match status" value="1"/>
</dbReference>
<dbReference type="SMART" id="SM00454">
    <property type="entry name" value="SAM"/>
    <property type="match status" value="1"/>
</dbReference>
<dbReference type="SUPFAM" id="SSF48403">
    <property type="entry name" value="Ankyrin repeat"/>
    <property type="match status" value="1"/>
</dbReference>
<dbReference type="SUPFAM" id="SSF56112">
    <property type="entry name" value="Protein kinase-like (PK-like)"/>
    <property type="match status" value="1"/>
</dbReference>
<dbReference type="SUPFAM" id="SSF47769">
    <property type="entry name" value="SAM/Pointed domain"/>
    <property type="match status" value="1"/>
</dbReference>
<dbReference type="PROSITE" id="PS50297">
    <property type="entry name" value="ANK_REP_REGION"/>
    <property type="match status" value="1"/>
</dbReference>
<dbReference type="PROSITE" id="PS50088">
    <property type="entry name" value="ANK_REPEAT"/>
    <property type="match status" value="3"/>
</dbReference>
<dbReference type="PROSITE" id="PS00107">
    <property type="entry name" value="PROTEIN_KINASE_ATP"/>
    <property type="match status" value="1"/>
</dbReference>
<dbReference type="PROSITE" id="PS50011">
    <property type="entry name" value="PROTEIN_KINASE_DOM"/>
    <property type="match status" value="1"/>
</dbReference>
<dbReference type="PROSITE" id="PS00108">
    <property type="entry name" value="PROTEIN_KINASE_ST"/>
    <property type="match status" value="1"/>
</dbReference>
<dbReference type="PROSITE" id="PS50105">
    <property type="entry name" value="SAM_DOMAIN"/>
    <property type="match status" value="1"/>
</dbReference>
<protein>
    <recommendedName>
        <fullName>Stress-activated protein kinase alpha</fullName>
        <shortName>SAPK-alpha</shortName>
        <ecNumber>2.7.11.1</ecNumber>
    </recommendedName>
</protein>
<accession>Q86AT8</accession>
<accession>Q23859</accession>
<accession>Q557I8</accession>
<keyword id="KW-0009">Actin-binding</keyword>
<keyword id="KW-0040">ANK repeat</keyword>
<keyword id="KW-0067">ATP-binding</keyword>
<keyword id="KW-0963">Cytoplasm</keyword>
<keyword id="KW-0206">Cytoskeleton</keyword>
<keyword id="KW-0418">Kinase</keyword>
<keyword id="KW-0547">Nucleotide-binding</keyword>
<keyword id="KW-0597">Phosphoprotein</keyword>
<keyword id="KW-1185">Reference proteome</keyword>
<keyword id="KW-0677">Repeat</keyword>
<keyword id="KW-0723">Serine/threonine-protein kinase</keyword>
<keyword id="KW-0808">Transferase</keyword>
<organism>
    <name type="scientific">Dictyostelium discoideum</name>
    <name type="common">Social amoeba</name>
    <dbReference type="NCBI Taxonomy" id="44689"/>
    <lineage>
        <taxon>Eukaryota</taxon>
        <taxon>Amoebozoa</taxon>
        <taxon>Evosea</taxon>
        <taxon>Eumycetozoa</taxon>
        <taxon>Dictyostelia</taxon>
        <taxon>Dictyosteliales</taxon>
        <taxon>Dictyosteliaceae</taxon>
        <taxon>Dictyostelium</taxon>
    </lineage>
</organism>